<keyword id="KW-0413">Isomerase</keyword>
<keyword id="KW-0460">Magnesium</keyword>
<keyword id="KW-0479">Metal-binding</keyword>
<keyword id="KW-0597">Phosphoprotein</keyword>
<keyword id="KW-1185">Reference proteome</keyword>
<sequence>MGRLFGTDGVRGVANADLTAELALGLSVAAAHVLAEAGTFEGHRPVAVVGRDPRASGEFLEAAVVAGLASAGVDVLLVGVLPTPAVAHLTGALGADLGVMLSASHNAMPDNGIKFFARGGHKLADDLEDRIEAVYEEHRTGAPWDRPTGAGVGRVTSYGEGADQYVAHLMSVLPNRLDGIKVVLDEAHGAAARVSPDAFTRAGAEIITIGAEPDGLNINDGCGSTHLAKLRAAVVEHGADLGIAHDGDADRCLAVDHTGAEVDGDQILAVLALAMRERSALRSDTVVATVMSNLGFKLAMEREGLSFVQTAVGDRYVLEEMKEHGYALGGEQSGHVIILDHATTGDGTLTGLLLAARVAQTGRTLQDLASVMERLPQVLVNVPDVDRARVKTSAELATAVAEAERELGATGRVLLRPSGTEPLVRVMVEAADIEQARSVAGRLADAVKSALG</sequence>
<accession>Q82DL7</accession>
<feature type="chain" id="PRO_0000147982" description="Phosphoglucosamine mutase">
    <location>
        <begin position="1"/>
        <end position="452"/>
    </location>
</feature>
<feature type="active site" description="Phosphoserine intermediate" evidence="1">
    <location>
        <position position="104"/>
    </location>
</feature>
<feature type="binding site" description="via phosphate group" evidence="1">
    <location>
        <position position="104"/>
    </location>
    <ligand>
        <name>Mg(2+)</name>
        <dbReference type="ChEBI" id="CHEBI:18420"/>
    </ligand>
</feature>
<feature type="binding site" evidence="1">
    <location>
        <position position="246"/>
    </location>
    <ligand>
        <name>Mg(2+)</name>
        <dbReference type="ChEBI" id="CHEBI:18420"/>
    </ligand>
</feature>
<feature type="binding site" evidence="1">
    <location>
        <position position="248"/>
    </location>
    <ligand>
        <name>Mg(2+)</name>
        <dbReference type="ChEBI" id="CHEBI:18420"/>
    </ligand>
</feature>
<feature type="binding site" evidence="1">
    <location>
        <position position="250"/>
    </location>
    <ligand>
        <name>Mg(2+)</name>
        <dbReference type="ChEBI" id="CHEBI:18420"/>
    </ligand>
</feature>
<feature type="modified residue" description="Phosphoserine" evidence="1">
    <location>
        <position position="104"/>
    </location>
</feature>
<evidence type="ECO:0000255" key="1">
    <source>
        <dbReference type="HAMAP-Rule" id="MF_01554"/>
    </source>
</evidence>
<gene>
    <name evidence="1" type="primary">glmM</name>
    <name type="ordered locus">SAV_4959</name>
</gene>
<protein>
    <recommendedName>
        <fullName evidence="1">Phosphoglucosamine mutase</fullName>
        <ecNumber evidence="1">5.4.2.10</ecNumber>
    </recommendedName>
</protein>
<comment type="function">
    <text evidence="1">Catalyzes the conversion of glucosamine-6-phosphate to glucosamine-1-phosphate.</text>
</comment>
<comment type="catalytic activity">
    <reaction evidence="1">
        <text>alpha-D-glucosamine 1-phosphate = D-glucosamine 6-phosphate</text>
        <dbReference type="Rhea" id="RHEA:23424"/>
        <dbReference type="ChEBI" id="CHEBI:58516"/>
        <dbReference type="ChEBI" id="CHEBI:58725"/>
        <dbReference type="EC" id="5.4.2.10"/>
    </reaction>
</comment>
<comment type="cofactor">
    <cofactor evidence="1">
        <name>Mg(2+)</name>
        <dbReference type="ChEBI" id="CHEBI:18420"/>
    </cofactor>
    <text evidence="1">Binds 1 Mg(2+) ion per subunit.</text>
</comment>
<comment type="PTM">
    <text evidence="1">Activated by phosphorylation.</text>
</comment>
<comment type="similarity">
    <text evidence="1">Belongs to the phosphohexose mutase family.</text>
</comment>
<name>GLMM_STRAW</name>
<proteinExistence type="inferred from homology"/>
<organism>
    <name type="scientific">Streptomyces avermitilis (strain ATCC 31267 / DSM 46492 / JCM 5070 / NBRC 14893 / NCIMB 12804 / NRRL 8165 / MA-4680)</name>
    <dbReference type="NCBI Taxonomy" id="227882"/>
    <lineage>
        <taxon>Bacteria</taxon>
        <taxon>Bacillati</taxon>
        <taxon>Actinomycetota</taxon>
        <taxon>Actinomycetes</taxon>
        <taxon>Kitasatosporales</taxon>
        <taxon>Streptomycetaceae</taxon>
        <taxon>Streptomyces</taxon>
    </lineage>
</organism>
<reference key="1">
    <citation type="journal article" date="2001" name="Proc. Natl. Acad. Sci. U.S.A.">
        <title>Genome sequence of an industrial microorganism Streptomyces avermitilis: deducing the ability of producing secondary metabolites.</title>
        <authorList>
            <person name="Omura S."/>
            <person name="Ikeda H."/>
            <person name="Ishikawa J."/>
            <person name="Hanamoto A."/>
            <person name="Takahashi C."/>
            <person name="Shinose M."/>
            <person name="Takahashi Y."/>
            <person name="Horikawa H."/>
            <person name="Nakazawa H."/>
            <person name="Osonoe T."/>
            <person name="Kikuchi H."/>
            <person name="Shiba T."/>
            <person name="Sakaki Y."/>
            <person name="Hattori M."/>
        </authorList>
    </citation>
    <scope>NUCLEOTIDE SEQUENCE [LARGE SCALE GENOMIC DNA]</scope>
    <source>
        <strain>ATCC 31267 / DSM 46492 / JCM 5070 / NBRC 14893 / NCIMB 12804 / NRRL 8165 / MA-4680</strain>
    </source>
</reference>
<reference key="2">
    <citation type="journal article" date="2003" name="Nat. Biotechnol.">
        <title>Complete genome sequence and comparative analysis of the industrial microorganism Streptomyces avermitilis.</title>
        <authorList>
            <person name="Ikeda H."/>
            <person name="Ishikawa J."/>
            <person name="Hanamoto A."/>
            <person name="Shinose M."/>
            <person name="Kikuchi H."/>
            <person name="Shiba T."/>
            <person name="Sakaki Y."/>
            <person name="Hattori M."/>
            <person name="Omura S."/>
        </authorList>
    </citation>
    <scope>NUCLEOTIDE SEQUENCE [LARGE SCALE GENOMIC DNA]</scope>
    <source>
        <strain>ATCC 31267 / DSM 46492 / JCM 5070 / NBRC 14893 / NCIMB 12804 / NRRL 8165 / MA-4680</strain>
    </source>
</reference>
<dbReference type="EC" id="5.4.2.10" evidence="1"/>
<dbReference type="EMBL" id="BA000030">
    <property type="protein sequence ID" value="BAC72671.1"/>
    <property type="molecule type" value="Genomic_DNA"/>
</dbReference>
<dbReference type="RefSeq" id="WP_010986365.1">
    <property type="nucleotide sequence ID" value="NZ_JZJK01000077.1"/>
</dbReference>
<dbReference type="SMR" id="Q82DL7"/>
<dbReference type="GeneID" id="41542042"/>
<dbReference type="KEGG" id="sma:SAVERM_4959"/>
<dbReference type="eggNOG" id="COG1109">
    <property type="taxonomic scope" value="Bacteria"/>
</dbReference>
<dbReference type="HOGENOM" id="CLU_016950_7_0_11"/>
<dbReference type="OrthoDB" id="9803322at2"/>
<dbReference type="Proteomes" id="UP000000428">
    <property type="component" value="Chromosome"/>
</dbReference>
<dbReference type="GO" id="GO:0005829">
    <property type="term" value="C:cytosol"/>
    <property type="evidence" value="ECO:0007669"/>
    <property type="project" value="TreeGrafter"/>
</dbReference>
<dbReference type="GO" id="GO:0000287">
    <property type="term" value="F:magnesium ion binding"/>
    <property type="evidence" value="ECO:0007669"/>
    <property type="project" value="UniProtKB-UniRule"/>
</dbReference>
<dbReference type="GO" id="GO:0008966">
    <property type="term" value="F:phosphoglucosamine mutase activity"/>
    <property type="evidence" value="ECO:0007669"/>
    <property type="project" value="UniProtKB-UniRule"/>
</dbReference>
<dbReference type="GO" id="GO:0004615">
    <property type="term" value="F:phosphomannomutase activity"/>
    <property type="evidence" value="ECO:0007669"/>
    <property type="project" value="TreeGrafter"/>
</dbReference>
<dbReference type="GO" id="GO:0005975">
    <property type="term" value="P:carbohydrate metabolic process"/>
    <property type="evidence" value="ECO:0007669"/>
    <property type="project" value="InterPro"/>
</dbReference>
<dbReference type="GO" id="GO:0009252">
    <property type="term" value="P:peptidoglycan biosynthetic process"/>
    <property type="evidence" value="ECO:0007669"/>
    <property type="project" value="TreeGrafter"/>
</dbReference>
<dbReference type="GO" id="GO:0006048">
    <property type="term" value="P:UDP-N-acetylglucosamine biosynthetic process"/>
    <property type="evidence" value="ECO:0007669"/>
    <property type="project" value="TreeGrafter"/>
</dbReference>
<dbReference type="CDD" id="cd05802">
    <property type="entry name" value="GlmM"/>
    <property type="match status" value="1"/>
</dbReference>
<dbReference type="FunFam" id="3.30.310.50:FF:000001">
    <property type="entry name" value="Phosphoglucosamine mutase"/>
    <property type="match status" value="1"/>
</dbReference>
<dbReference type="FunFam" id="3.40.120.10:FF:000001">
    <property type="entry name" value="Phosphoglucosamine mutase"/>
    <property type="match status" value="1"/>
</dbReference>
<dbReference type="FunFam" id="3.40.120.10:FF:000002">
    <property type="entry name" value="Phosphoglucosamine mutase"/>
    <property type="match status" value="1"/>
</dbReference>
<dbReference type="Gene3D" id="3.40.120.10">
    <property type="entry name" value="Alpha-D-Glucose-1,6-Bisphosphate, subunit A, domain 3"/>
    <property type="match status" value="3"/>
</dbReference>
<dbReference type="Gene3D" id="3.30.310.50">
    <property type="entry name" value="Alpha-D-phosphohexomutase, C-terminal domain"/>
    <property type="match status" value="1"/>
</dbReference>
<dbReference type="HAMAP" id="MF_01554_B">
    <property type="entry name" value="GlmM_B"/>
    <property type="match status" value="1"/>
</dbReference>
<dbReference type="InterPro" id="IPR005844">
    <property type="entry name" value="A-D-PHexomutase_a/b/a-I"/>
</dbReference>
<dbReference type="InterPro" id="IPR016055">
    <property type="entry name" value="A-D-PHexomutase_a/b/a-I/II/III"/>
</dbReference>
<dbReference type="InterPro" id="IPR005845">
    <property type="entry name" value="A-D-PHexomutase_a/b/a-II"/>
</dbReference>
<dbReference type="InterPro" id="IPR005846">
    <property type="entry name" value="A-D-PHexomutase_a/b/a-III"/>
</dbReference>
<dbReference type="InterPro" id="IPR005843">
    <property type="entry name" value="A-D-PHexomutase_C"/>
</dbReference>
<dbReference type="InterPro" id="IPR036900">
    <property type="entry name" value="A-D-PHexomutase_C_sf"/>
</dbReference>
<dbReference type="InterPro" id="IPR005841">
    <property type="entry name" value="Alpha-D-phosphohexomutase_SF"/>
</dbReference>
<dbReference type="InterPro" id="IPR006352">
    <property type="entry name" value="GlmM_bact"/>
</dbReference>
<dbReference type="InterPro" id="IPR050060">
    <property type="entry name" value="Phosphoglucosamine_mutase"/>
</dbReference>
<dbReference type="NCBIfam" id="TIGR01455">
    <property type="entry name" value="glmM"/>
    <property type="match status" value="1"/>
</dbReference>
<dbReference type="PANTHER" id="PTHR42946:SF1">
    <property type="entry name" value="PHOSPHOGLUCOMUTASE (ALPHA-D-GLUCOSE-1,6-BISPHOSPHATE-DEPENDENT)"/>
    <property type="match status" value="1"/>
</dbReference>
<dbReference type="PANTHER" id="PTHR42946">
    <property type="entry name" value="PHOSPHOHEXOSE MUTASE"/>
    <property type="match status" value="1"/>
</dbReference>
<dbReference type="Pfam" id="PF02878">
    <property type="entry name" value="PGM_PMM_I"/>
    <property type="match status" value="1"/>
</dbReference>
<dbReference type="Pfam" id="PF02879">
    <property type="entry name" value="PGM_PMM_II"/>
    <property type="match status" value="1"/>
</dbReference>
<dbReference type="Pfam" id="PF02880">
    <property type="entry name" value="PGM_PMM_III"/>
    <property type="match status" value="1"/>
</dbReference>
<dbReference type="Pfam" id="PF00408">
    <property type="entry name" value="PGM_PMM_IV"/>
    <property type="match status" value="1"/>
</dbReference>
<dbReference type="PRINTS" id="PR00509">
    <property type="entry name" value="PGMPMM"/>
</dbReference>
<dbReference type="SUPFAM" id="SSF55957">
    <property type="entry name" value="Phosphoglucomutase, C-terminal domain"/>
    <property type="match status" value="1"/>
</dbReference>
<dbReference type="SUPFAM" id="SSF53738">
    <property type="entry name" value="Phosphoglucomutase, first 3 domains"/>
    <property type="match status" value="3"/>
</dbReference>